<evidence type="ECO:0000255" key="1">
    <source>
        <dbReference type="HAMAP-Rule" id="MF_00170"/>
    </source>
</evidence>
<dbReference type="EC" id="5.3.1.6" evidence="1"/>
<dbReference type="EMBL" id="CP000408">
    <property type="protein sequence ID" value="ABP92616.1"/>
    <property type="molecule type" value="Genomic_DNA"/>
</dbReference>
<dbReference type="SMR" id="A4W2M7"/>
<dbReference type="KEGG" id="ssv:SSU98_1458"/>
<dbReference type="HOGENOM" id="CLU_056590_1_0_9"/>
<dbReference type="UniPathway" id="UPA00115">
    <property type="reaction ID" value="UER00412"/>
</dbReference>
<dbReference type="GO" id="GO:0004751">
    <property type="term" value="F:ribose-5-phosphate isomerase activity"/>
    <property type="evidence" value="ECO:0007669"/>
    <property type="project" value="UniProtKB-UniRule"/>
</dbReference>
<dbReference type="GO" id="GO:0009052">
    <property type="term" value="P:pentose-phosphate shunt, non-oxidative branch"/>
    <property type="evidence" value="ECO:0007669"/>
    <property type="project" value="UniProtKB-UniRule"/>
</dbReference>
<dbReference type="CDD" id="cd01398">
    <property type="entry name" value="RPI_A"/>
    <property type="match status" value="1"/>
</dbReference>
<dbReference type="FunFam" id="3.40.50.1360:FF:000001">
    <property type="entry name" value="Ribose-5-phosphate isomerase A"/>
    <property type="match status" value="1"/>
</dbReference>
<dbReference type="Gene3D" id="3.30.70.260">
    <property type="match status" value="1"/>
</dbReference>
<dbReference type="Gene3D" id="3.40.50.1360">
    <property type="match status" value="1"/>
</dbReference>
<dbReference type="HAMAP" id="MF_00170">
    <property type="entry name" value="Rib_5P_isom_A"/>
    <property type="match status" value="1"/>
</dbReference>
<dbReference type="InterPro" id="IPR037171">
    <property type="entry name" value="NagB/RpiA_transferase-like"/>
</dbReference>
<dbReference type="InterPro" id="IPR050262">
    <property type="entry name" value="Ribose-5P_isomerase"/>
</dbReference>
<dbReference type="InterPro" id="IPR020672">
    <property type="entry name" value="Ribose5P_isomerase_typA_subgr"/>
</dbReference>
<dbReference type="InterPro" id="IPR004788">
    <property type="entry name" value="Ribose5P_isomerase_type_A"/>
</dbReference>
<dbReference type="NCBIfam" id="NF001924">
    <property type="entry name" value="PRK00702.1"/>
    <property type="match status" value="1"/>
</dbReference>
<dbReference type="NCBIfam" id="TIGR00021">
    <property type="entry name" value="rpiA"/>
    <property type="match status" value="1"/>
</dbReference>
<dbReference type="PANTHER" id="PTHR43748">
    <property type="entry name" value="RIBOSE-5-PHOSPHATE ISOMERASE 3, CHLOROPLASTIC-RELATED"/>
    <property type="match status" value="1"/>
</dbReference>
<dbReference type="PANTHER" id="PTHR43748:SF3">
    <property type="entry name" value="RIBOSE-5-PHOSPHATE ISOMERASE 3, CHLOROPLASTIC-RELATED"/>
    <property type="match status" value="1"/>
</dbReference>
<dbReference type="Pfam" id="PF06026">
    <property type="entry name" value="Rib_5-P_isom_A"/>
    <property type="match status" value="1"/>
</dbReference>
<dbReference type="SUPFAM" id="SSF75445">
    <property type="entry name" value="D-ribose-5-phosphate isomerase (RpiA), lid domain"/>
    <property type="match status" value="1"/>
</dbReference>
<dbReference type="SUPFAM" id="SSF100950">
    <property type="entry name" value="NagB/RpiA/CoA transferase-like"/>
    <property type="match status" value="1"/>
</dbReference>
<reference key="1">
    <citation type="journal article" date="2007" name="PLoS ONE">
        <title>A glimpse of streptococcal toxic shock syndrome from comparative genomics of S. suis 2 Chinese isolates.</title>
        <authorList>
            <person name="Chen C."/>
            <person name="Tang J."/>
            <person name="Dong W."/>
            <person name="Wang C."/>
            <person name="Feng Y."/>
            <person name="Wang J."/>
            <person name="Zheng F."/>
            <person name="Pan X."/>
            <person name="Liu D."/>
            <person name="Li M."/>
            <person name="Song Y."/>
            <person name="Zhu X."/>
            <person name="Sun H."/>
            <person name="Feng T."/>
            <person name="Guo Z."/>
            <person name="Ju A."/>
            <person name="Ge J."/>
            <person name="Dong Y."/>
            <person name="Sun W."/>
            <person name="Jiang Y."/>
            <person name="Wang J."/>
            <person name="Yan J."/>
            <person name="Yang H."/>
            <person name="Wang X."/>
            <person name="Gao G.F."/>
            <person name="Yang R."/>
            <person name="Wang J."/>
            <person name="Yu J."/>
        </authorList>
    </citation>
    <scope>NUCLEOTIDE SEQUENCE [LARGE SCALE GENOMIC DNA]</scope>
    <source>
        <strain>98HAH33</strain>
    </source>
</reference>
<keyword id="KW-0413">Isomerase</keyword>
<accession>A4W2M7</accession>
<protein>
    <recommendedName>
        <fullName evidence="1">Ribose-5-phosphate isomerase A</fullName>
        <ecNumber evidence="1">5.3.1.6</ecNumber>
    </recommendedName>
    <alternativeName>
        <fullName evidence="1">Phosphoriboisomerase A</fullName>
        <shortName evidence="1">PRI</shortName>
    </alternativeName>
</protein>
<gene>
    <name evidence="1" type="primary">rpiA</name>
    <name type="ordered locus">SSU98_1458</name>
</gene>
<sequence>MINLKEQVGIKAAEFVTDGMIVGLGTGSTAYYFVQEIGRRVAEEGLQITGVTTSHATAEHAASLGIPLKNIDEVEYVDLTVDGADEVDGDFNGIKGGGAALLMEKVVAVNSKDCIWIVDESKMVQTLGAFKLPVEVVQYGAENLFRLFEKKGYRPSFRMRNGKKHITDMQNFIIDLDLRRIEDTYALAEELDRTVGVVEHGLFIGLISKVIVGTPEGPNIIEKK</sequence>
<proteinExistence type="inferred from homology"/>
<name>RPIA_STRS2</name>
<feature type="chain" id="PRO_1000017014" description="Ribose-5-phosphate isomerase A">
    <location>
        <begin position="1"/>
        <end position="224"/>
    </location>
</feature>
<feature type="active site" description="Proton acceptor" evidence="1">
    <location>
        <position position="104"/>
    </location>
</feature>
<feature type="binding site" evidence="1">
    <location>
        <begin position="26"/>
        <end position="29"/>
    </location>
    <ligand>
        <name>substrate</name>
    </ligand>
</feature>
<feature type="binding site" evidence="1">
    <location>
        <begin position="82"/>
        <end position="85"/>
    </location>
    <ligand>
        <name>substrate</name>
    </ligand>
</feature>
<feature type="binding site" evidence="1">
    <location>
        <begin position="95"/>
        <end position="98"/>
    </location>
    <ligand>
        <name>substrate</name>
    </ligand>
</feature>
<feature type="binding site" evidence="1">
    <location>
        <position position="122"/>
    </location>
    <ligand>
        <name>substrate</name>
    </ligand>
</feature>
<comment type="function">
    <text evidence="1">Catalyzes the reversible conversion of ribose-5-phosphate to ribulose 5-phosphate.</text>
</comment>
<comment type="catalytic activity">
    <reaction evidence="1">
        <text>aldehydo-D-ribose 5-phosphate = D-ribulose 5-phosphate</text>
        <dbReference type="Rhea" id="RHEA:14657"/>
        <dbReference type="ChEBI" id="CHEBI:58121"/>
        <dbReference type="ChEBI" id="CHEBI:58273"/>
        <dbReference type="EC" id="5.3.1.6"/>
    </reaction>
</comment>
<comment type="pathway">
    <text evidence="1">Carbohydrate degradation; pentose phosphate pathway; D-ribose 5-phosphate from D-ribulose 5-phosphate (non-oxidative stage): step 1/1.</text>
</comment>
<comment type="subunit">
    <text evidence="1">Homodimer.</text>
</comment>
<comment type="similarity">
    <text evidence="1">Belongs to the ribose 5-phosphate isomerase family.</text>
</comment>
<organism>
    <name type="scientific">Streptococcus suis (strain 98HAH33)</name>
    <dbReference type="NCBI Taxonomy" id="391296"/>
    <lineage>
        <taxon>Bacteria</taxon>
        <taxon>Bacillati</taxon>
        <taxon>Bacillota</taxon>
        <taxon>Bacilli</taxon>
        <taxon>Lactobacillales</taxon>
        <taxon>Streptococcaceae</taxon>
        <taxon>Streptococcus</taxon>
    </lineage>
</organism>